<feature type="chain" id="PRO_0000458831" description="Aurora kinase">
    <location>
        <begin position="1"/>
        <end position="311"/>
    </location>
</feature>
<feature type="domain" description="Protein kinase" evidence="2">
    <location>
        <begin position="20"/>
        <end position="300"/>
    </location>
</feature>
<feature type="region of interest" description="Activation loop" evidence="10">
    <location>
        <begin position="189"/>
        <end position="216"/>
    </location>
</feature>
<feature type="short sequence motif" description="Destruction (D)-box" evidence="10">
    <location>
        <begin position="280"/>
        <end position="299"/>
    </location>
</feature>
<feature type="active site" description="Proton acceptor" evidence="1 2">
    <location>
        <position position="143"/>
    </location>
</feature>
<feature type="binding site" evidence="2 3">
    <location>
        <position position="49"/>
    </location>
    <ligand>
        <name>ATP</name>
        <dbReference type="ChEBI" id="CHEBI:30616"/>
    </ligand>
</feature>
<feature type="modified residue" description="Phosphothreonine; by autocatalysis" evidence="6">
    <location>
        <position position="205"/>
    </location>
</feature>
<feature type="mutagenesis site" description="Reduced protein expression level, which may result from decreased translation efficiency or protein stability. No effect on mRNA expression level. Detected as wild-type, although only faintly, in mitotic nuclei of interphase cells, and mitotic median body and paraflagellar rods." evidence="5">
    <location>
        <begin position="153"/>
        <end position="180"/>
    </location>
</feature>
<feature type="mutagenesis site" description="No effect on autophosphorylation." evidence="6">
    <original>S</original>
    <variation>A</variation>
    <location>
        <position position="171"/>
    </location>
</feature>
<feature type="mutagenesis site" description="Loss of autophosphorylation." evidence="6">
    <original>T</original>
    <variation>A</variation>
    <location>
        <position position="205"/>
    </location>
</feature>
<accession>E2RTQ7</accession>
<accession>A4KWE2</accession>
<accession>A8BBM9</accession>
<protein>
    <recommendedName>
        <fullName evidence="4 7 8 11">Aurora kinase</fullName>
        <ecNumber evidence="4 6">2.7.11.1</ecNumber>
    </recommendedName>
    <alternativeName>
        <fullName evidence="8">GlAK</fullName>
    </alternativeName>
    <alternativeName>
        <fullName evidence="7">gAK</fullName>
    </alternativeName>
</protein>
<gene>
    <name evidence="13" type="ORF">GL50803_005358</name>
    <name evidence="12" type="ORF">GL50803_5358</name>
</gene>
<reference evidence="11" key="1">
    <citation type="journal article" date="2008" name="Int. J. Parasitol.">
        <title>Giardia lamblia aurora kinase: a regulator of mitosis in a binucleate parasite.</title>
        <authorList>
            <person name="Davids B.J."/>
            <person name="Williams S."/>
            <person name="Lauwaet T."/>
            <person name="Palanca T."/>
            <person name="Gillin F.D."/>
        </authorList>
    </citation>
    <scope>NUCLEOTIDE SEQUENCE [GENOMIC DNA]</scope>
    <scope>FUNCTION</scope>
    <scope>ACTIVITY REGULATION</scope>
    <scope>SUBCELLULAR LOCATION</scope>
    <scope>REGION</scope>
    <scope>MOTIF</scope>
    <scope>PHOSPHORYLATION</scope>
    <scope>MUTAGENESIS OF 153-LYS--MET-180</scope>
    <scope>3D-STRUCTURE MODELING</scope>
    <source>
        <strain evidence="7">ATCC 50803 / WB clone C6</strain>
    </source>
</reference>
<reference evidence="12 14" key="2">
    <citation type="journal article" date="2007" name="Science">
        <title>Genomic minimalism in the early diverging intestinal parasite Giardia lamblia.</title>
        <authorList>
            <person name="Morrison H.G."/>
            <person name="McArthur A.G."/>
            <person name="Gillin F.D."/>
            <person name="Aley S.B."/>
            <person name="Adam R.D."/>
            <person name="Olsen G.J."/>
            <person name="Best A.A."/>
            <person name="Cande W.Z."/>
            <person name="Chen F."/>
            <person name="Cipriano M.J."/>
            <person name="Davids B.J."/>
            <person name="Dawson S.C."/>
            <person name="Elmendorf H.G."/>
            <person name="Hehl A.B."/>
            <person name="Holder M.E."/>
            <person name="Huse S.M."/>
            <person name="Kim U.U."/>
            <person name="Lasek-Nesselquist E."/>
            <person name="Manning G."/>
            <person name="Nigam A."/>
            <person name="Nixon J.E.J."/>
            <person name="Palm D."/>
            <person name="Passamaneck N.E."/>
            <person name="Prabhu A."/>
            <person name="Reich C.I."/>
            <person name="Reiner D.S."/>
            <person name="Samuelson J."/>
            <person name="Svard S.G."/>
            <person name="Sogin M.L."/>
        </authorList>
    </citation>
    <scope>NUCLEOTIDE SEQUENCE [LARGE SCALE GENOMIC DNA]</scope>
    <source>
        <strain evidence="14">ATCC 50803 / WB clone C6</strain>
    </source>
</reference>
<reference evidence="13" key="3">
    <citation type="submission" date="2019-07" db="EMBL/GenBank/DDBJ databases">
        <title>New Giardia intestinalis WB genome in near-complete chromosomes.</title>
        <authorList>
            <person name="Xu F."/>
            <person name="Jex A."/>
            <person name="Svard S.G."/>
        </authorList>
    </citation>
    <scope>NUCLEOTIDE SEQUENCE [LARGE SCALE GENOMIC DNA]</scope>
    <source>
        <strain evidence="13">ATCC 50803 / WB clone C6</strain>
    </source>
</reference>
<reference key="4">
    <citation type="journal article" date="2017" name="J. Eukaryot. Microbiol.">
        <title>Phosphorylation of Serine 148 in Giardia lamblia End-binding 1 Protein is Important for Cell Division.</title>
        <authorList>
            <person name="Kim J."/>
            <person name="Lee H.Y."/>
            <person name="Lee K.H."/>
            <person name="Park S.J."/>
        </authorList>
    </citation>
    <scope>FUNCTION</scope>
    <scope>CATALYTIC ACTIVITY</scope>
    <scope>INTERACTION WITH EB1</scope>
    <scope>SUBCELLULAR LOCATION</scope>
    <scope>DEVELOPMENTAL STAGE</scope>
    <scope>PTM</scope>
    <scope>PHOSPHORYLATION AT THR-205</scope>
    <scope>MUTAGENESIS OF SER-171 AND THR-205</scope>
    <source>
        <strain evidence="8">ATCC 30957 / WB</strain>
    </source>
</reference>
<dbReference type="EC" id="2.7.11.1" evidence="4 6"/>
<dbReference type="EMBL" id="EF107111">
    <property type="protein sequence ID" value="ABN80997.1"/>
    <property type="molecule type" value="Genomic_DNA"/>
</dbReference>
<dbReference type="EMBL" id="AACB02000010">
    <property type="protein sequence ID" value="EDO80342.1"/>
    <property type="molecule type" value="Genomic_DNA"/>
</dbReference>
<dbReference type="EMBL" id="AACB03000001">
    <property type="protein sequence ID" value="KAE8305279.1"/>
    <property type="molecule type" value="Genomic_DNA"/>
</dbReference>
<dbReference type="RefSeq" id="XP_001708016.1">
    <property type="nucleotide sequence ID" value="XM_001707964.1"/>
</dbReference>
<dbReference type="SMR" id="E2RTQ7"/>
<dbReference type="FunCoup" id="E2RTQ7">
    <property type="interactions" value="170"/>
</dbReference>
<dbReference type="STRING" id="184922.E2RTQ7"/>
<dbReference type="iPTMnet" id="E2RTQ7"/>
<dbReference type="EnsemblProtists" id="EDO80342">
    <property type="protein sequence ID" value="EDO80342"/>
    <property type="gene ID" value="GL50803_5358"/>
</dbReference>
<dbReference type="GeneID" id="5700926"/>
<dbReference type="KEGG" id="gla:GL50803_005358"/>
<dbReference type="VEuPathDB" id="GiardiaDB:DHA2_5358"/>
<dbReference type="VEuPathDB" id="GiardiaDB:GL50581_494"/>
<dbReference type="VEuPathDB" id="GiardiaDB:GL50803_005358"/>
<dbReference type="VEuPathDB" id="GiardiaDB:GL50803_5358"/>
<dbReference type="VEuPathDB" id="GiardiaDB:QR46_3366"/>
<dbReference type="HOGENOM" id="CLU_000288_63_0_1"/>
<dbReference type="InParanoid" id="E2RTQ7"/>
<dbReference type="OMA" id="YVDHWCL"/>
<dbReference type="Proteomes" id="UP000001548">
    <property type="component" value="Chromosome 5"/>
</dbReference>
<dbReference type="GO" id="GO:0005813">
    <property type="term" value="C:centrosome"/>
    <property type="evidence" value="ECO:0000314"/>
    <property type="project" value="UniProtKB"/>
</dbReference>
<dbReference type="GO" id="GO:0032133">
    <property type="term" value="C:chromosome passenger complex"/>
    <property type="evidence" value="ECO:0000318"/>
    <property type="project" value="GO_Central"/>
</dbReference>
<dbReference type="GO" id="GO:0005737">
    <property type="term" value="C:cytoplasm"/>
    <property type="evidence" value="ECO:0007669"/>
    <property type="project" value="UniProtKB-KW"/>
</dbReference>
<dbReference type="GO" id="GO:0097568">
    <property type="term" value="C:median body"/>
    <property type="evidence" value="ECO:0000314"/>
    <property type="project" value="UniProtKB"/>
</dbReference>
<dbReference type="GO" id="GO:0031514">
    <property type="term" value="C:motile cilium"/>
    <property type="evidence" value="ECO:0000314"/>
    <property type="project" value="UniProtKB"/>
</dbReference>
<dbReference type="GO" id="GO:0031965">
    <property type="term" value="C:nuclear membrane"/>
    <property type="evidence" value="ECO:0000314"/>
    <property type="project" value="UniProtKB"/>
</dbReference>
<dbReference type="GO" id="GO:0005634">
    <property type="term" value="C:nucleus"/>
    <property type="evidence" value="ECO:0000314"/>
    <property type="project" value="UniProtKB"/>
</dbReference>
<dbReference type="GO" id="GO:0005819">
    <property type="term" value="C:spindle"/>
    <property type="evidence" value="ECO:0000314"/>
    <property type="project" value="UniProtKB"/>
</dbReference>
<dbReference type="GO" id="GO:0005876">
    <property type="term" value="C:spindle microtubule"/>
    <property type="evidence" value="ECO:0000314"/>
    <property type="project" value="UniProtKB"/>
</dbReference>
<dbReference type="GO" id="GO:0051233">
    <property type="term" value="C:spindle midzone"/>
    <property type="evidence" value="ECO:0000318"/>
    <property type="project" value="GO_Central"/>
</dbReference>
<dbReference type="GO" id="GO:0000922">
    <property type="term" value="C:spindle pole"/>
    <property type="evidence" value="ECO:0000314"/>
    <property type="project" value="UniProtKB"/>
</dbReference>
<dbReference type="GO" id="GO:0097597">
    <property type="term" value="C:ventral disc"/>
    <property type="evidence" value="ECO:0000314"/>
    <property type="project" value="UniProtKB"/>
</dbReference>
<dbReference type="GO" id="GO:0005524">
    <property type="term" value="F:ATP binding"/>
    <property type="evidence" value="ECO:0007669"/>
    <property type="project" value="UniProtKB-KW"/>
</dbReference>
<dbReference type="GO" id="GO:0008092">
    <property type="term" value="F:cytoskeletal protein binding"/>
    <property type="evidence" value="ECO:0000353"/>
    <property type="project" value="UniProtKB"/>
</dbReference>
<dbReference type="GO" id="GO:0004674">
    <property type="term" value="F:protein serine/threonine kinase activity"/>
    <property type="evidence" value="ECO:0000314"/>
    <property type="project" value="UniProtKB"/>
</dbReference>
<dbReference type="GO" id="GO:1902850">
    <property type="term" value="P:microtubule cytoskeleton organization involved in mitosis"/>
    <property type="evidence" value="ECO:0000314"/>
    <property type="project" value="UniProtKB"/>
</dbReference>
<dbReference type="GO" id="GO:0000281">
    <property type="term" value="P:mitotic cytokinesis"/>
    <property type="evidence" value="ECO:0000314"/>
    <property type="project" value="UniProtKB"/>
</dbReference>
<dbReference type="GO" id="GO:0140014">
    <property type="term" value="P:mitotic nuclear division"/>
    <property type="evidence" value="ECO:0000314"/>
    <property type="project" value="UniProtKB"/>
</dbReference>
<dbReference type="GO" id="GO:0007052">
    <property type="term" value="P:mitotic spindle organization"/>
    <property type="evidence" value="ECO:0000314"/>
    <property type="project" value="UniProtKB"/>
</dbReference>
<dbReference type="GO" id="GO:0051726">
    <property type="term" value="P:regulation of cell cycle"/>
    <property type="evidence" value="ECO:0000314"/>
    <property type="project" value="UniProtKB"/>
</dbReference>
<dbReference type="GO" id="GO:0032465">
    <property type="term" value="P:regulation of cytokinesis"/>
    <property type="evidence" value="ECO:0000314"/>
    <property type="project" value="UniProtKB"/>
</dbReference>
<dbReference type="CDD" id="cd14007">
    <property type="entry name" value="STKc_Aurora"/>
    <property type="match status" value="1"/>
</dbReference>
<dbReference type="FunFam" id="1.10.510.10:FF:001757">
    <property type="entry name" value="Aurora kinase"/>
    <property type="match status" value="1"/>
</dbReference>
<dbReference type="FunFam" id="3.30.200.20:FF:001026">
    <property type="entry name" value="Aurora kinase"/>
    <property type="match status" value="1"/>
</dbReference>
<dbReference type="Gene3D" id="3.30.200.20">
    <property type="entry name" value="Phosphorylase Kinase, domain 1"/>
    <property type="match status" value="1"/>
</dbReference>
<dbReference type="Gene3D" id="1.10.510.10">
    <property type="entry name" value="Transferase(Phosphotransferase) domain 1"/>
    <property type="match status" value="1"/>
</dbReference>
<dbReference type="InterPro" id="IPR030616">
    <property type="entry name" value="Aur-like"/>
</dbReference>
<dbReference type="InterPro" id="IPR011009">
    <property type="entry name" value="Kinase-like_dom_sf"/>
</dbReference>
<dbReference type="InterPro" id="IPR000719">
    <property type="entry name" value="Prot_kinase_dom"/>
</dbReference>
<dbReference type="InterPro" id="IPR017441">
    <property type="entry name" value="Protein_kinase_ATP_BS"/>
</dbReference>
<dbReference type="InterPro" id="IPR008271">
    <property type="entry name" value="Ser/Thr_kinase_AS"/>
</dbReference>
<dbReference type="PANTHER" id="PTHR24350">
    <property type="entry name" value="SERINE/THREONINE-PROTEIN KINASE IAL-RELATED"/>
    <property type="match status" value="1"/>
</dbReference>
<dbReference type="Pfam" id="PF00069">
    <property type="entry name" value="Pkinase"/>
    <property type="match status" value="1"/>
</dbReference>
<dbReference type="SMART" id="SM00220">
    <property type="entry name" value="S_TKc"/>
    <property type="match status" value="1"/>
</dbReference>
<dbReference type="SUPFAM" id="SSF56112">
    <property type="entry name" value="Protein kinase-like (PK-like)"/>
    <property type="match status" value="1"/>
</dbReference>
<dbReference type="PROSITE" id="PS00107">
    <property type="entry name" value="PROTEIN_KINASE_ATP"/>
    <property type="match status" value="1"/>
</dbReference>
<dbReference type="PROSITE" id="PS50011">
    <property type="entry name" value="PROTEIN_KINASE_DOM"/>
    <property type="match status" value="1"/>
</dbReference>
<dbReference type="PROSITE" id="PS00108">
    <property type="entry name" value="PROTEIN_KINASE_ST"/>
    <property type="match status" value="1"/>
</dbReference>
<organism evidence="12">
    <name type="scientific">Giardia intestinalis (strain ATCC 50803 / WB clone C6)</name>
    <name type="common">Giardia lamblia</name>
    <dbReference type="NCBI Taxonomy" id="184922"/>
    <lineage>
        <taxon>Eukaryota</taxon>
        <taxon>Metamonada</taxon>
        <taxon>Diplomonadida</taxon>
        <taxon>Hexamitidae</taxon>
        <taxon>Giardiinae</taxon>
        <taxon>Giardia</taxon>
    </lineage>
</organism>
<evidence type="ECO:0000255" key="1">
    <source>
        <dbReference type="PIRSR" id="PIRSR630616-1"/>
    </source>
</evidence>
<evidence type="ECO:0000255" key="2">
    <source>
        <dbReference type="PROSITE-ProRule" id="PRU00159"/>
    </source>
</evidence>
<evidence type="ECO:0000255" key="3">
    <source>
        <dbReference type="PROSITE-ProRule" id="PRU10141"/>
    </source>
</evidence>
<evidence type="ECO:0000255" key="4">
    <source>
        <dbReference type="RuleBase" id="RU367134"/>
    </source>
</evidence>
<evidence type="ECO:0000269" key="5">
    <source>
    </source>
</evidence>
<evidence type="ECO:0000269" key="6">
    <source>
    </source>
</evidence>
<evidence type="ECO:0000303" key="7">
    <source>
    </source>
</evidence>
<evidence type="ECO:0000303" key="8">
    <source>
    </source>
</evidence>
<evidence type="ECO:0000305" key="9"/>
<evidence type="ECO:0000305" key="10">
    <source>
    </source>
</evidence>
<evidence type="ECO:0000312" key="11">
    <source>
        <dbReference type="EMBL" id="ABN80997.1"/>
    </source>
</evidence>
<evidence type="ECO:0000312" key="12">
    <source>
        <dbReference type="EMBL" id="EDO80342.1"/>
    </source>
</evidence>
<evidence type="ECO:0000312" key="13">
    <source>
        <dbReference type="EMBL" id="KAE8305279.1"/>
    </source>
</evidence>
<evidence type="ECO:0000312" key="14">
    <source>
        <dbReference type="Proteomes" id="UP000001548"/>
    </source>
</evidence>
<sequence length="311" mass="36286">MPQHLVPHTGTGKRTTIEDFEIGRFLGRGKYGLVYLAREQSSKLVVALKVLYKSYIKSERVEGQVRRELDIHLNVRHINIIRLYTWFQDETRVFLVLEVAPYGELYQRLQQFGKFPLPVVSKIIRDVAQAIQYLHRKNIFHRDLKAENILICKGKETKEHTDAHNSDDSISVHEHELVRMAHYTYKIADFGWSVHHPTHGGRRRTQCGTLDYLPPEVMLGQSYDKACDIWSLGALCYELICGTAPFYHDEIKITRQNIANVEYSFTKDFSPASKDFIQRMLIRSPEARISIEDILRHPFLRQTDHRSKVPK</sequence>
<name>AURK_GIAIC</name>
<keyword id="KW-0067">ATP-binding</keyword>
<keyword id="KW-0131">Cell cycle</keyword>
<keyword id="KW-0132">Cell division</keyword>
<keyword id="KW-0963">Cytoplasm</keyword>
<keyword id="KW-0206">Cytoskeleton</keyword>
<keyword id="KW-0418">Kinase</keyword>
<keyword id="KW-0472">Membrane</keyword>
<keyword id="KW-0498">Mitosis</keyword>
<keyword id="KW-0547">Nucleotide-binding</keyword>
<keyword id="KW-0539">Nucleus</keyword>
<keyword id="KW-0597">Phosphoprotein</keyword>
<keyword id="KW-1185">Reference proteome</keyword>
<keyword id="KW-0723">Serine/threonine-protein kinase</keyword>
<keyword id="KW-0808">Transferase</keyword>
<proteinExistence type="evidence at protein level"/>
<comment type="function">
    <text evidence="5 6">Involved in regulation of the cell cycle (PubMed:17964578, PubMed:27859890). Required for mitotic cell division and cytokinesis (PubMed:17964578, PubMed:27859890). Based on its localization to centrosomes and spindle microtubules, as well as to various cytoskeletal components such as the median body, parental attachment disk, and anterior and posterior-lateral paraflagellar dense rods, may coordinate reorganization and segregation of tubulin-containing structures during mitosis and cytokinesis (PubMed:17964578). May regulate microtubule disassembly by phosphorylating cytoskeletal proteins leading to their destabilization (PubMed:17964578). Phosphorylates EB1 at 'Ser-148' in vitro (PubMed:27859890). Phosphorylates histone H3 in vitro (PubMed:27859890).</text>
</comment>
<comment type="catalytic activity">
    <reaction evidence="4 6">
        <text>L-seryl-[protein] + ATP = O-phospho-L-seryl-[protein] + ADP + H(+)</text>
        <dbReference type="Rhea" id="RHEA:17989"/>
        <dbReference type="Rhea" id="RHEA-COMP:9863"/>
        <dbReference type="Rhea" id="RHEA-COMP:11604"/>
        <dbReference type="ChEBI" id="CHEBI:15378"/>
        <dbReference type="ChEBI" id="CHEBI:29999"/>
        <dbReference type="ChEBI" id="CHEBI:30616"/>
        <dbReference type="ChEBI" id="CHEBI:83421"/>
        <dbReference type="ChEBI" id="CHEBI:456216"/>
        <dbReference type="EC" id="2.7.11.1"/>
    </reaction>
</comment>
<comment type="catalytic activity">
    <reaction evidence="4 6">
        <text>L-threonyl-[protein] + ATP = O-phospho-L-threonyl-[protein] + ADP + H(+)</text>
        <dbReference type="Rhea" id="RHEA:46608"/>
        <dbReference type="Rhea" id="RHEA-COMP:11060"/>
        <dbReference type="Rhea" id="RHEA-COMP:11605"/>
        <dbReference type="ChEBI" id="CHEBI:15378"/>
        <dbReference type="ChEBI" id="CHEBI:30013"/>
        <dbReference type="ChEBI" id="CHEBI:30616"/>
        <dbReference type="ChEBI" id="CHEBI:61977"/>
        <dbReference type="ChEBI" id="CHEBI:456216"/>
        <dbReference type="EC" id="2.7.11.1"/>
    </reaction>
</comment>
<comment type="activity regulation">
    <text evidence="5 9">Activated by cell-cycle phase specific phosphorylation (Probable). Inhibited by ATP-competitive inhibitors N-[4-[[6-Methoxy-7-[3-(4-morpholinyl)propoxy]-4-quinazolinyl]amino]phenyl]benzamide (ZM447439) and cyclopropanecarboxylic acid-(3-(4-(3-trifluoromethylphenylamino)-pyrimidin-2-ylamino)-phenyl)-amide (CFPPA) (PubMed:17964578). Inhibition leads to reduced growth, increased cytokinesis, microtubular defects, and increased ploidy of the cells (PubMed:17964578).</text>
</comment>
<comment type="subunit">
    <text evidence="6">Interacts with EB1 (via C-terminal residues 101-238).</text>
</comment>
<comment type="subcellular location">
    <subcellularLocation>
        <location evidence="5">Nucleus</location>
    </subcellularLocation>
    <subcellularLocation>
        <location evidence="5">Cytoplasm</location>
        <location evidence="5">Cytoskeleton</location>
        <location evidence="5">Microtubule organizing center</location>
        <location evidence="5">Centrosome</location>
    </subcellularLocation>
    <subcellularLocation>
        <location evidence="5 6">Cytoplasm</location>
        <location evidence="5 6">Cytoskeleton</location>
        <location evidence="5 6">Spindle</location>
    </subcellularLocation>
    <subcellularLocation>
        <location evidence="5">Cytoplasm</location>
        <location evidence="5">Cytoskeleton</location>
        <location evidence="5">Spindle pole</location>
    </subcellularLocation>
    <subcellularLocation>
        <location evidence="5 6">Cytoplasm</location>
        <location evidence="5 6">Cytoskeleton</location>
    </subcellularLocation>
    <subcellularLocation>
        <location evidence="6">Nucleus membrane</location>
    </subcellularLocation>
    <text evidence="5 6">Non-phosphorylated form is exclusively localized to both nuclei in interphase trophozoites. At the beginning of mitosis, it is mostly in the nuclei and co-localizes with chromatin through telophase. Phosphorylated form co-localizes with centrin to centrosomes from prophase through cytokinesis. Phosphorylated form also localizes to the spindle microtubules surrounding each two nuclei and the spindle poles in metaphase. It is additionally dynamically localized to cytoskeletal structures including the median body, rim of the attachment disk, and anterior and posterior-lateral paraflagellar dense rods during different stages of mitosis. Phosphorylated form remains localized to microtubules of both spindles in anaphase through telophase as the spindles elongate to allow the four nuclei segregate to opposite poles of both spindles. Phosphorylated form localizes only to the gradually unfolding parental ventral attachment disk called pontoon later in telophase and cytokinesis, but not to the two nascent daughter disks dorsal to the disassembling parental disk and spindles. Phosphorylated form localizes to the median body in all stages of mitosis, but it is less prominent after anaphase. Neither non-phosphorylated nor phosphorylated form localizes to endoplasmic reticulum, lysosome-like peripheral vesicles, mitosomes or flagellar axonemes (PubMed:17964578). Colocalizes with EB1 at the nuclear membrane and median bodies in interphase, at the spindle microtubules surrounding the chromosomes in metaphase, at the mitotic spindles in anaphase and telophase, and at the nuclear membranes in cytokinesis (PubMed:27859890).</text>
</comment>
<comment type="developmental stage">
    <text evidence="6">Expressed in trophozoites (at protein level).</text>
</comment>
<comment type="PTM">
    <text evidence="5 6">Phosphorylated in mitosis and cytokinesis (PubMed:17964578). Activated by autophosphorylation at Thr-205 (PubMed:27859890).</text>
</comment>
<comment type="similarity">
    <text evidence="4">Belongs to the protein kinase superfamily. Ser/Thr protein kinase family. Aurora subfamily.</text>
</comment>